<reference key="1">
    <citation type="submission" date="2009-03" db="EMBL/GenBank/DDBJ databases">
        <title>Complete genome sequence of Edwardsiella ictaluri 93-146.</title>
        <authorList>
            <person name="Williams M.L."/>
            <person name="Gillaspy A.F."/>
            <person name="Dyer D.W."/>
            <person name="Thune R.L."/>
            <person name="Waldbieser G.C."/>
            <person name="Schuster S.C."/>
            <person name="Gipson J."/>
            <person name="Zaitshik J."/>
            <person name="Landry C."/>
            <person name="Lawrence M.L."/>
        </authorList>
    </citation>
    <scope>NUCLEOTIDE SEQUENCE [LARGE SCALE GENOMIC DNA]</scope>
    <source>
        <strain>93-146</strain>
    </source>
</reference>
<evidence type="ECO:0000255" key="1">
    <source>
        <dbReference type="HAMAP-Rule" id="MF_01201"/>
    </source>
</evidence>
<keyword id="KW-0413">Isomerase</keyword>
<keyword id="KW-0663">Pyridoxal phosphate</keyword>
<proteinExistence type="inferred from homology"/>
<gene>
    <name type="primary">alr</name>
    <name type="ordered locus">NT01EI_0245</name>
</gene>
<accession>C5BCC5</accession>
<name>ALR_EDWI9</name>
<organism>
    <name type="scientific">Edwardsiella ictaluri (strain 93-146)</name>
    <dbReference type="NCBI Taxonomy" id="634503"/>
    <lineage>
        <taxon>Bacteria</taxon>
        <taxon>Pseudomonadati</taxon>
        <taxon>Pseudomonadota</taxon>
        <taxon>Gammaproteobacteria</taxon>
        <taxon>Enterobacterales</taxon>
        <taxon>Hafniaceae</taxon>
        <taxon>Edwardsiella</taxon>
    </lineage>
</organism>
<sequence length="363" mass="39228">MKAATAIIDRRALRHNFQQIRKFAPHSRLIAVVKANAYGHGLLETAKILNQADCYGVARIGEALMLRSGGIVKPILLLEGFFSASDLPVLVANNIETAVHSEEQLQALENAGLERPIRVWMKLDTGMHRLGVRPEQAEAFYRRLCACPNVAQPVNFMSHFSCADEPDSGRTEVQLACFDDFVRGKTGEQSIAASGGILLWPQSHRDMVRPGIIMYGVSPQADLSLAADHYGLQPAMTLQSSLIAVREHKAGEPVGYGGAWVAQRDTRLGVVAIGYGDGYPRSAPSGTPVLINGREVPIVGRVSMDMISVDLGPQAADRVGDNVIMWGPGLPVEKVAACTGISAYELITKLTSRVAMEYIGEEA</sequence>
<comment type="function">
    <text evidence="1">Catalyzes the interconversion of L-alanine and D-alanine. May also act on other amino acids.</text>
</comment>
<comment type="catalytic activity">
    <reaction evidence="1">
        <text>L-alanine = D-alanine</text>
        <dbReference type="Rhea" id="RHEA:20249"/>
        <dbReference type="ChEBI" id="CHEBI:57416"/>
        <dbReference type="ChEBI" id="CHEBI:57972"/>
        <dbReference type="EC" id="5.1.1.1"/>
    </reaction>
</comment>
<comment type="cofactor">
    <cofactor evidence="1">
        <name>pyridoxal 5'-phosphate</name>
        <dbReference type="ChEBI" id="CHEBI:597326"/>
    </cofactor>
</comment>
<comment type="pathway">
    <text evidence="1">Amino-acid biosynthesis; D-alanine biosynthesis; D-alanine from L-alanine: step 1/1.</text>
</comment>
<comment type="similarity">
    <text evidence="1">Belongs to the alanine racemase family.</text>
</comment>
<protein>
    <recommendedName>
        <fullName evidence="1">Alanine racemase</fullName>
        <ecNumber evidence="1">5.1.1.1</ecNumber>
    </recommendedName>
</protein>
<dbReference type="EC" id="5.1.1.1" evidence="1"/>
<dbReference type="EMBL" id="CP001600">
    <property type="protein sequence ID" value="ACR67488.1"/>
    <property type="molecule type" value="Genomic_DNA"/>
</dbReference>
<dbReference type="RefSeq" id="WP_015869697.1">
    <property type="nucleotide sequence ID" value="NZ_CP169062.1"/>
</dbReference>
<dbReference type="SMR" id="C5BCC5"/>
<dbReference type="STRING" id="67780.B6E78_12340"/>
<dbReference type="GeneID" id="69537344"/>
<dbReference type="KEGG" id="eic:NT01EI_0245"/>
<dbReference type="PATRIC" id="fig|634503.3.peg.221"/>
<dbReference type="HOGENOM" id="CLU_028393_1_0_6"/>
<dbReference type="OrthoDB" id="9813814at2"/>
<dbReference type="UniPathway" id="UPA00042">
    <property type="reaction ID" value="UER00497"/>
</dbReference>
<dbReference type="Proteomes" id="UP000001485">
    <property type="component" value="Chromosome"/>
</dbReference>
<dbReference type="GO" id="GO:0005829">
    <property type="term" value="C:cytosol"/>
    <property type="evidence" value="ECO:0007669"/>
    <property type="project" value="TreeGrafter"/>
</dbReference>
<dbReference type="GO" id="GO:0008784">
    <property type="term" value="F:alanine racemase activity"/>
    <property type="evidence" value="ECO:0007669"/>
    <property type="project" value="UniProtKB-UniRule"/>
</dbReference>
<dbReference type="GO" id="GO:0030170">
    <property type="term" value="F:pyridoxal phosphate binding"/>
    <property type="evidence" value="ECO:0007669"/>
    <property type="project" value="UniProtKB-UniRule"/>
</dbReference>
<dbReference type="GO" id="GO:0030632">
    <property type="term" value="P:D-alanine biosynthetic process"/>
    <property type="evidence" value="ECO:0007669"/>
    <property type="project" value="UniProtKB-UniRule"/>
</dbReference>
<dbReference type="CDD" id="cd06827">
    <property type="entry name" value="PLPDE_III_AR_proteobact"/>
    <property type="match status" value="1"/>
</dbReference>
<dbReference type="FunFam" id="2.40.37.10:FF:000002">
    <property type="entry name" value="Alanine racemase"/>
    <property type="match status" value="1"/>
</dbReference>
<dbReference type="FunFam" id="3.20.20.10:FF:000002">
    <property type="entry name" value="Alanine racemase"/>
    <property type="match status" value="1"/>
</dbReference>
<dbReference type="Gene3D" id="3.20.20.10">
    <property type="entry name" value="Alanine racemase"/>
    <property type="match status" value="1"/>
</dbReference>
<dbReference type="Gene3D" id="2.40.37.10">
    <property type="entry name" value="Lyase, Ornithine Decarboxylase, Chain A, domain 1"/>
    <property type="match status" value="1"/>
</dbReference>
<dbReference type="HAMAP" id="MF_01201">
    <property type="entry name" value="Ala_racemase"/>
    <property type="match status" value="1"/>
</dbReference>
<dbReference type="InterPro" id="IPR000821">
    <property type="entry name" value="Ala_racemase"/>
</dbReference>
<dbReference type="InterPro" id="IPR009006">
    <property type="entry name" value="Ala_racemase/Decarboxylase_C"/>
</dbReference>
<dbReference type="InterPro" id="IPR011079">
    <property type="entry name" value="Ala_racemase_C"/>
</dbReference>
<dbReference type="InterPro" id="IPR001608">
    <property type="entry name" value="Ala_racemase_N"/>
</dbReference>
<dbReference type="InterPro" id="IPR020622">
    <property type="entry name" value="Ala_racemase_pyridoxalP-BS"/>
</dbReference>
<dbReference type="InterPro" id="IPR029066">
    <property type="entry name" value="PLP-binding_barrel"/>
</dbReference>
<dbReference type="NCBIfam" id="TIGR00492">
    <property type="entry name" value="alr"/>
    <property type="match status" value="1"/>
</dbReference>
<dbReference type="PANTHER" id="PTHR30511">
    <property type="entry name" value="ALANINE RACEMASE"/>
    <property type="match status" value="1"/>
</dbReference>
<dbReference type="PANTHER" id="PTHR30511:SF4">
    <property type="entry name" value="ALANINE RACEMASE, BIOSYNTHETIC"/>
    <property type="match status" value="1"/>
</dbReference>
<dbReference type="Pfam" id="PF00842">
    <property type="entry name" value="Ala_racemase_C"/>
    <property type="match status" value="1"/>
</dbReference>
<dbReference type="Pfam" id="PF01168">
    <property type="entry name" value="Ala_racemase_N"/>
    <property type="match status" value="1"/>
</dbReference>
<dbReference type="PRINTS" id="PR00992">
    <property type="entry name" value="ALARACEMASE"/>
</dbReference>
<dbReference type="SMART" id="SM01005">
    <property type="entry name" value="Ala_racemase_C"/>
    <property type="match status" value="1"/>
</dbReference>
<dbReference type="SUPFAM" id="SSF50621">
    <property type="entry name" value="Alanine racemase C-terminal domain-like"/>
    <property type="match status" value="1"/>
</dbReference>
<dbReference type="SUPFAM" id="SSF51419">
    <property type="entry name" value="PLP-binding barrel"/>
    <property type="match status" value="1"/>
</dbReference>
<dbReference type="PROSITE" id="PS00395">
    <property type="entry name" value="ALANINE_RACEMASE"/>
    <property type="match status" value="1"/>
</dbReference>
<feature type="chain" id="PRO_1000213833" description="Alanine racemase">
    <location>
        <begin position="1"/>
        <end position="363"/>
    </location>
</feature>
<feature type="active site" description="Proton acceptor; specific for D-alanine" evidence="1">
    <location>
        <position position="34"/>
    </location>
</feature>
<feature type="active site" description="Proton acceptor; specific for L-alanine" evidence="1">
    <location>
        <position position="256"/>
    </location>
</feature>
<feature type="binding site" evidence="1">
    <location>
        <position position="129"/>
    </location>
    <ligand>
        <name>substrate</name>
    </ligand>
</feature>
<feature type="binding site" evidence="1">
    <location>
        <position position="304"/>
    </location>
    <ligand>
        <name>substrate</name>
    </ligand>
</feature>
<feature type="modified residue" description="N6-(pyridoxal phosphate)lysine" evidence="1">
    <location>
        <position position="34"/>
    </location>
</feature>